<sequence>MSCQISCKSRIGGGGGFRSFSSGSAVVSGGSRRSTRSFSCLSRHGGGGGGAGGGGFGSRSLVGLGGTKSISISVAGGGGSFGSGGGFGGRGGGFGGGSGFGGGSGFGGGGFGGGGFGGGSGFGGGGFGGGGFGGGRFGGGGGLGGFGGPGGFGPGGFPGGGIHEVSINESLLQPLNVKVDPEIQNVKSQEREQIKTLNNKFASFIDKVRFLEQQNQVLQTKWELLQQLDVSTRTTNLEPIFQAYIAKLKKYVDTLSAERTSQGSELNNMQDLVEDFKKKYEDEINKRTAAENDFVTLKKDVDNNYMTKVELQAKTDVLTQELEFIKFLFDXELSQMQTQISETNVTLSMDNNRSLDLDSIISEVKAQYEEIAQKSKAEAEALYHSKYEELQVTAGKHGDSLKEVKMEISELNRMIQRLQGEIAHVKKQCKSVQEAIAEAEQKGEHAVKDAQGKLSDLEEALQQAREDLAGLLRDYQELMNVKLALDVEIATYRKLLEGEECRMSGDLSSNVTVSVTSSSMSSSMTSRGGFGGYGSGGRGSSSGGGGFSSGSGSYSSGGRGSSSRGGGGGGYGSGGGSGGKYSSGGGSRGGSGSGGGYGSSSGGGYGSGGGSRGGFSSQKGGSGSGSSVTFSFR</sequence>
<evidence type="ECO:0000250" key="1">
    <source>
        <dbReference type="UniProtKB" id="P04104"/>
    </source>
</evidence>
<evidence type="ECO:0000250" key="2">
    <source>
        <dbReference type="UniProtKB" id="P35908"/>
    </source>
</evidence>
<evidence type="ECO:0000250" key="3">
    <source>
        <dbReference type="UniProtKB" id="Q3TTY5"/>
    </source>
</evidence>
<evidence type="ECO:0000255" key="4"/>
<evidence type="ECO:0000255" key="5">
    <source>
        <dbReference type="PROSITE-ProRule" id="PRU01188"/>
    </source>
</evidence>
<evidence type="ECO:0000256" key="6">
    <source>
        <dbReference type="SAM" id="MobiDB-lite"/>
    </source>
</evidence>
<evidence type="ECO:0000269" key="7">
    <source>
    </source>
</evidence>
<evidence type="ECO:0000305" key="8"/>
<evidence type="ECO:0000312" key="9">
    <source>
        <dbReference type="EMBL" id="AAQ83908.1"/>
    </source>
</evidence>
<accession>Q6EIZ1</accession>
<feature type="chain" id="PRO_0000283762" description="Keratin, type II cytoskeletal 2 epidermal">
    <location>
        <begin position="1"/>
        <end position="633"/>
    </location>
</feature>
<feature type="domain" description="IF rod" evidence="5">
    <location>
        <begin position="190"/>
        <end position="503"/>
    </location>
</feature>
<feature type="region of interest" description="Head" evidence="4">
    <location>
        <begin position="1"/>
        <end position="189"/>
    </location>
</feature>
<feature type="region of interest" description="Coil 1A" evidence="4">
    <location>
        <begin position="190"/>
        <end position="225"/>
    </location>
</feature>
<feature type="region of interest" description="Linker 1" evidence="4">
    <location>
        <begin position="226"/>
        <end position="244"/>
    </location>
</feature>
<feature type="region of interest" description="Coil 1B" evidence="4">
    <location>
        <begin position="245"/>
        <end position="336"/>
    </location>
</feature>
<feature type="region of interest" description="Linker 12" evidence="4">
    <location>
        <begin position="337"/>
        <end position="360"/>
    </location>
</feature>
<feature type="region of interest" description="Coil 2" evidence="4">
    <location>
        <begin position="361"/>
        <end position="499"/>
    </location>
</feature>
<feature type="region of interest" description="Tail" evidence="4">
    <location>
        <begin position="500"/>
        <end position="633"/>
    </location>
</feature>
<feature type="region of interest" description="Disordered" evidence="6">
    <location>
        <begin position="518"/>
        <end position="633"/>
    </location>
</feature>
<feature type="compositionally biased region" description="Low complexity" evidence="6">
    <location>
        <begin position="518"/>
        <end position="527"/>
    </location>
</feature>
<feature type="compositionally biased region" description="Gly residues" evidence="6">
    <location>
        <begin position="528"/>
        <end position="613"/>
    </location>
</feature>
<feature type="site" description="Stutter" evidence="4">
    <location>
        <position position="441"/>
    </location>
</feature>
<feature type="modified residue" description="Asymmetric dimethylarginine" evidence="3">
    <location>
        <position position="18"/>
    </location>
</feature>
<feature type="modified residue" description="Phosphoserine" evidence="1">
    <location>
        <position position="21"/>
    </location>
</feature>
<feature type="modified residue" description="Phosphoserine" evidence="1">
    <location>
        <position position="24"/>
    </location>
</feature>
<feature type="modified residue" description="Phosphoserine" evidence="2">
    <location>
        <position position="60"/>
    </location>
</feature>
<feature type="modified residue" description="Omega-N-methylarginine" evidence="1">
    <location>
        <position position="588"/>
    </location>
</feature>
<feature type="modified residue" description="Omega-N-methylarginine" evidence="1">
    <location>
        <position position="612"/>
    </location>
</feature>
<gene>
    <name type="primary">KRT2</name>
    <name evidence="9" type="synonym">K2E</name>
    <name type="synonym">KRT2A</name>
</gene>
<dbReference type="EMBL" id="AY318943">
    <property type="protein sequence ID" value="AAQ83908.1"/>
    <property type="molecule type" value="mRNA"/>
</dbReference>
<dbReference type="FunCoup" id="Q6EIZ1">
    <property type="interactions" value="3"/>
</dbReference>
<dbReference type="PaxDb" id="9612-ENSCAFP00000010729"/>
<dbReference type="eggNOG" id="ENOG502QTM6">
    <property type="taxonomic scope" value="Eukaryota"/>
</dbReference>
<dbReference type="InParanoid" id="Q6EIZ1"/>
<dbReference type="Proteomes" id="UP000002254">
    <property type="component" value="Unplaced"/>
</dbReference>
<dbReference type="Proteomes" id="UP000694429">
    <property type="component" value="Unplaced"/>
</dbReference>
<dbReference type="Proteomes" id="UP000694542">
    <property type="component" value="Unplaced"/>
</dbReference>
<dbReference type="Proteomes" id="UP000805418">
    <property type="component" value="Unplaced"/>
</dbReference>
<dbReference type="GO" id="GO:0005737">
    <property type="term" value="C:cytoplasm"/>
    <property type="evidence" value="ECO:0000250"/>
    <property type="project" value="UniProtKB"/>
</dbReference>
<dbReference type="GO" id="GO:0045095">
    <property type="term" value="C:keratin filament"/>
    <property type="evidence" value="ECO:0000318"/>
    <property type="project" value="GO_Central"/>
</dbReference>
<dbReference type="GO" id="GO:0030280">
    <property type="term" value="F:structural constituent of skin epidermis"/>
    <property type="evidence" value="ECO:0000318"/>
    <property type="project" value="GO_Central"/>
</dbReference>
<dbReference type="GO" id="GO:0045109">
    <property type="term" value="P:intermediate filament organization"/>
    <property type="evidence" value="ECO:0000318"/>
    <property type="project" value="GO_Central"/>
</dbReference>
<dbReference type="GO" id="GO:0031424">
    <property type="term" value="P:keratinization"/>
    <property type="evidence" value="ECO:0000318"/>
    <property type="project" value="GO_Central"/>
</dbReference>
<dbReference type="GO" id="GO:0045684">
    <property type="term" value="P:positive regulation of epidermis development"/>
    <property type="evidence" value="ECO:0000250"/>
    <property type="project" value="UniProtKB"/>
</dbReference>
<dbReference type="FunFam" id="1.20.5.1160:FF:000001">
    <property type="entry name" value="Keratin type II"/>
    <property type="match status" value="1"/>
</dbReference>
<dbReference type="FunFam" id="1.20.5.170:FF:000004">
    <property type="entry name" value="Keratin, type II cytoskeletal 5"/>
    <property type="match status" value="1"/>
</dbReference>
<dbReference type="FunFam" id="1.20.5.500:FF:000001">
    <property type="entry name" value="Type II keratin 23"/>
    <property type="match status" value="1"/>
</dbReference>
<dbReference type="Gene3D" id="1.20.5.170">
    <property type="match status" value="1"/>
</dbReference>
<dbReference type="Gene3D" id="1.20.5.500">
    <property type="entry name" value="Single helix bin"/>
    <property type="match status" value="1"/>
</dbReference>
<dbReference type="Gene3D" id="1.20.5.1160">
    <property type="entry name" value="Vasodilator-stimulated phosphoprotein"/>
    <property type="match status" value="1"/>
</dbReference>
<dbReference type="InterPro" id="IPR018039">
    <property type="entry name" value="IF_conserved"/>
</dbReference>
<dbReference type="InterPro" id="IPR039008">
    <property type="entry name" value="IF_rod_dom"/>
</dbReference>
<dbReference type="InterPro" id="IPR032444">
    <property type="entry name" value="Keratin_2_head"/>
</dbReference>
<dbReference type="InterPro" id="IPR003054">
    <property type="entry name" value="Keratin_II"/>
</dbReference>
<dbReference type="PANTHER" id="PTHR45616">
    <property type="entry name" value="GATA-TYPE DOMAIN-CONTAINING PROTEIN"/>
    <property type="match status" value="1"/>
</dbReference>
<dbReference type="PANTHER" id="PTHR45616:SF14">
    <property type="entry name" value="KERATIN, TYPE II CYTOSKELETAL 2 EPIDERMAL"/>
    <property type="match status" value="1"/>
</dbReference>
<dbReference type="Pfam" id="PF00038">
    <property type="entry name" value="Filament"/>
    <property type="match status" value="1"/>
</dbReference>
<dbReference type="Pfam" id="PF16208">
    <property type="entry name" value="Keratin_2_head"/>
    <property type="match status" value="2"/>
</dbReference>
<dbReference type="PRINTS" id="PR01276">
    <property type="entry name" value="TYPE2KERATIN"/>
</dbReference>
<dbReference type="SMART" id="SM01391">
    <property type="entry name" value="Filament"/>
    <property type="match status" value="1"/>
</dbReference>
<dbReference type="SUPFAM" id="SSF64593">
    <property type="entry name" value="Intermediate filament protein, coiled coil region"/>
    <property type="match status" value="3"/>
</dbReference>
<dbReference type="PROSITE" id="PS00226">
    <property type="entry name" value="IF_ROD_1"/>
    <property type="match status" value="1"/>
</dbReference>
<dbReference type="PROSITE" id="PS51842">
    <property type="entry name" value="IF_ROD_2"/>
    <property type="match status" value="1"/>
</dbReference>
<protein>
    <recommendedName>
        <fullName>Keratin, type II cytoskeletal 2 epidermal</fullName>
    </recommendedName>
    <alternativeName>
        <fullName>Cytokeratin-2e</fullName>
        <shortName>CK-2e</shortName>
    </alternativeName>
    <alternativeName>
        <fullName>Epithelial keratin-2e</fullName>
    </alternativeName>
    <alternativeName>
        <fullName>Keratin-2 epidermis</fullName>
    </alternativeName>
    <alternativeName>
        <fullName>Keratin-2e</fullName>
        <shortName>K2e</shortName>
    </alternativeName>
    <alternativeName>
        <fullName>Type-II keratin Kb2</fullName>
    </alternativeName>
</protein>
<reference evidence="9" key="1">
    <citation type="journal article" date="2005" name="Cytogenet. Genome Res.">
        <title>Comparative sequence analysis and radiation hybrid mapping of two epidermal type II keratin genes in the dog: keratin 1 and keratin 2e.</title>
        <authorList>
            <person name="Credille K.M."/>
            <person name="Guyon R."/>
            <person name="Andre C."/>
            <person name="Murphy K."/>
            <person name="Tucker K."/>
            <person name="Barnhart K.F."/>
            <person name="Dunstan R.W."/>
        </authorList>
    </citation>
    <scope>NUCLEOTIDE SEQUENCE [MRNA]</scope>
    <source>
        <tissue evidence="7">Epidermis</tissue>
    </source>
</reference>
<name>K22E_CANLF</name>
<proteinExistence type="evidence at transcript level"/>
<comment type="function">
    <text evidence="2 3">Probably contributes to terminal cornification. Associated with keratinocyte activation, proliferation and keratinization (By similarity). Required for maintenance of corneocytes and keratin filaments in suprabasal keratinocytes in the epidermis of the ear, potentially via moderation of expression and localization of keratins and their partner proteins (By similarity). Plays a role in the establishment of the epidermal barrier on plantar skin (By similarity).</text>
</comment>
<comment type="subunit">
    <text evidence="3">Heterotetramer of two type I and two type II keratins. Associates with KRT10.</text>
</comment>
<comment type="subcellular location">
    <subcellularLocation>
        <location evidence="2">Cytoplasm</location>
    </subcellularLocation>
</comment>
<comment type="miscellaneous">
    <text evidence="8">There are two types of cytoskeletal and microfibrillar keratin: I (acidic; 40-55 kDa) and II (neutral to basic; 56-70 kDa).</text>
</comment>
<comment type="similarity">
    <text evidence="5">Belongs to the intermediate filament family.</text>
</comment>
<organism>
    <name type="scientific">Canis lupus familiaris</name>
    <name type="common">Dog</name>
    <name type="synonym">Canis familiaris</name>
    <dbReference type="NCBI Taxonomy" id="9615"/>
    <lineage>
        <taxon>Eukaryota</taxon>
        <taxon>Metazoa</taxon>
        <taxon>Chordata</taxon>
        <taxon>Craniata</taxon>
        <taxon>Vertebrata</taxon>
        <taxon>Euteleostomi</taxon>
        <taxon>Mammalia</taxon>
        <taxon>Eutheria</taxon>
        <taxon>Laurasiatheria</taxon>
        <taxon>Carnivora</taxon>
        <taxon>Caniformia</taxon>
        <taxon>Canidae</taxon>
        <taxon>Canis</taxon>
    </lineage>
</organism>
<keyword id="KW-0175">Coiled coil</keyword>
<keyword id="KW-0963">Cytoplasm</keyword>
<keyword id="KW-0403">Intermediate filament</keyword>
<keyword id="KW-0416">Keratin</keyword>
<keyword id="KW-0488">Methylation</keyword>
<keyword id="KW-0597">Phosphoprotein</keyword>
<keyword id="KW-1185">Reference proteome</keyword>